<gene>
    <name evidence="1" type="primary">coaE</name>
    <name type="ordered locus">LIC_13085</name>
</gene>
<feature type="chain" id="PRO_0000172955" description="Dephospho-CoA kinase">
    <location>
        <begin position="1"/>
        <end position="207"/>
    </location>
</feature>
<feature type="domain" description="DPCK" evidence="1">
    <location>
        <begin position="12"/>
        <end position="207"/>
    </location>
</feature>
<feature type="binding site" evidence="1">
    <location>
        <begin position="20"/>
        <end position="25"/>
    </location>
    <ligand>
        <name>ATP</name>
        <dbReference type="ChEBI" id="CHEBI:30616"/>
    </ligand>
</feature>
<reference key="1">
    <citation type="journal article" date="2004" name="J. Bacteriol.">
        <title>Comparative genomics of two Leptospira interrogans serovars reveals novel insights into physiology and pathogenesis.</title>
        <authorList>
            <person name="Nascimento A.L.T.O."/>
            <person name="Ko A.I."/>
            <person name="Martins E.A.L."/>
            <person name="Monteiro-Vitorello C.B."/>
            <person name="Ho P.L."/>
            <person name="Haake D.A."/>
            <person name="Verjovski-Almeida S."/>
            <person name="Hartskeerl R.A."/>
            <person name="Marques M.V."/>
            <person name="Oliveira M.C."/>
            <person name="Menck C.F.M."/>
            <person name="Leite L.C.C."/>
            <person name="Carrer H."/>
            <person name="Coutinho L.L."/>
            <person name="Degrave W.M."/>
            <person name="Dellagostin O.A."/>
            <person name="El-Dorry H."/>
            <person name="Ferro E.S."/>
            <person name="Ferro M.I.T."/>
            <person name="Furlan L.R."/>
            <person name="Gamberini M."/>
            <person name="Giglioti E.A."/>
            <person name="Goes-Neto A."/>
            <person name="Goldman G.H."/>
            <person name="Goldman M.H.S."/>
            <person name="Harakava R."/>
            <person name="Jeronimo S.M.B."/>
            <person name="Junqueira-de-Azevedo I.L.M."/>
            <person name="Kimura E.T."/>
            <person name="Kuramae E.E."/>
            <person name="Lemos E.G.M."/>
            <person name="Lemos M.V.F."/>
            <person name="Marino C.L."/>
            <person name="Nunes L.R."/>
            <person name="de Oliveira R.C."/>
            <person name="Pereira G.G."/>
            <person name="Reis M.S."/>
            <person name="Schriefer A."/>
            <person name="Siqueira W.J."/>
            <person name="Sommer P."/>
            <person name="Tsai S.M."/>
            <person name="Simpson A.J.G."/>
            <person name="Ferro J.A."/>
            <person name="Camargo L.E.A."/>
            <person name="Kitajima J.P."/>
            <person name="Setubal J.C."/>
            <person name="Van Sluys M.A."/>
        </authorList>
    </citation>
    <scope>NUCLEOTIDE SEQUENCE [LARGE SCALE GENOMIC DNA]</scope>
    <source>
        <strain>Fiocruz L1-130</strain>
    </source>
</reference>
<evidence type="ECO:0000255" key="1">
    <source>
        <dbReference type="HAMAP-Rule" id="MF_00376"/>
    </source>
</evidence>
<evidence type="ECO:0000305" key="2"/>
<dbReference type="EC" id="2.7.1.24" evidence="1"/>
<dbReference type="EMBL" id="AE016823">
    <property type="protein sequence ID" value="AAS71634.1"/>
    <property type="status" value="ALT_INIT"/>
    <property type="molecule type" value="Genomic_DNA"/>
</dbReference>
<dbReference type="RefSeq" id="WP_001181520.1">
    <property type="nucleotide sequence ID" value="NC_005823.1"/>
</dbReference>
<dbReference type="SMR" id="Q72MV4"/>
<dbReference type="GeneID" id="61142960"/>
<dbReference type="KEGG" id="lic:LIC_13085"/>
<dbReference type="HOGENOM" id="CLU_057180_3_1_12"/>
<dbReference type="UniPathway" id="UPA00241">
    <property type="reaction ID" value="UER00356"/>
</dbReference>
<dbReference type="Proteomes" id="UP000007037">
    <property type="component" value="Chromosome I"/>
</dbReference>
<dbReference type="GO" id="GO:0005737">
    <property type="term" value="C:cytoplasm"/>
    <property type="evidence" value="ECO:0007669"/>
    <property type="project" value="UniProtKB-SubCell"/>
</dbReference>
<dbReference type="GO" id="GO:0005524">
    <property type="term" value="F:ATP binding"/>
    <property type="evidence" value="ECO:0007669"/>
    <property type="project" value="UniProtKB-UniRule"/>
</dbReference>
<dbReference type="GO" id="GO:0004140">
    <property type="term" value="F:dephospho-CoA kinase activity"/>
    <property type="evidence" value="ECO:0007669"/>
    <property type="project" value="UniProtKB-UniRule"/>
</dbReference>
<dbReference type="GO" id="GO:0015937">
    <property type="term" value="P:coenzyme A biosynthetic process"/>
    <property type="evidence" value="ECO:0007669"/>
    <property type="project" value="UniProtKB-UniRule"/>
</dbReference>
<dbReference type="CDD" id="cd02022">
    <property type="entry name" value="DPCK"/>
    <property type="match status" value="1"/>
</dbReference>
<dbReference type="Gene3D" id="3.40.50.300">
    <property type="entry name" value="P-loop containing nucleotide triphosphate hydrolases"/>
    <property type="match status" value="1"/>
</dbReference>
<dbReference type="HAMAP" id="MF_00376">
    <property type="entry name" value="Dephospho_CoA_kinase"/>
    <property type="match status" value="1"/>
</dbReference>
<dbReference type="InterPro" id="IPR001977">
    <property type="entry name" value="Depp_CoAkinase"/>
</dbReference>
<dbReference type="InterPro" id="IPR027417">
    <property type="entry name" value="P-loop_NTPase"/>
</dbReference>
<dbReference type="NCBIfam" id="TIGR00152">
    <property type="entry name" value="dephospho-CoA kinase"/>
    <property type="match status" value="1"/>
</dbReference>
<dbReference type="PANTHER" id="PTHR10695:SF46">
    <property type="entry name" value="BIFUNCTIONAL COENZYME A SYNTHASE-RELATED"/>
    <property type="match status" value="1"/>
</dbReference>
<dbReference type="PANTHER" id="PTHR10695">
    <property type="entry name" value="DEPHOSPHO-COA KINASE-RELATED"/>
    <property type="match status" value="1"/>
</dbReference>
<dbReference type="Pfam" id="PF01121">
    <property type="entry name" value="CoaE"/>
    <property type="match status" value="1"/>
</dbReference>
<dbReference type="SUPFAM" id="SSF52540">
    <property type="entry name" value="P-loop containing nucleoside triphosphate hydrolases"/>
    <property type="match status" value="1"/>
</dbReference>
<dbReference type="PROSITE" id="PS51219">
    <property type="entry name" value="DPCK"/>
    <property type="match status" value="1"/>
</dbReference>
<keyword id="KW-0067">ATP-binding</keyword>
<keyword id="KW-0173">Coenzyme A biosynthesis</keyword>
<keyword id="KW-0963">Cytoplasm</keyword>
<keyword id="KW-0418">Kinase</keyword>
<keyword id="KW-0547">Nucleotide-binding</keyword>
<keyword id="KW-0808">Transferase</keyword>
<organism>
    <name type="scientific">Leptospira interrogans serogroup Icterohaemorrhagiae serovar copenhageni (strain Fiocruz L1-130)</name>
    <dbReference type="NCBI Taxonomy" id="267671"/>
    <lineage>
        <taxon>Bacteria</taxon>
        <taxon>Pseudomonadati</taxon>
        <taxon>Spirochaetota</taxon>
        <taxon>Spirochaetia</taxon>
        <taxon>Leptospirales</taxon>
        <taxon>Leptospiraceae</taxon>
        <taxon>Leptospira</taxon>
    </lineage>
</organism>
<sequence length="207" mass="23368">MQNSDSGKKTFLIGITGMIGGGKSTATKILEEMGCFGINADRLAKRYTEPDSPILIELVELLGSEILDEQGKPDRKKISEIVFNNPKKLSRLNQLIHPLVRKDFQKILETTAKGKMVIWEVPLLFETDAYTLCDATVTVDSDPEESILRTISRDKVKKEDVLARIKNQLPLTEKLKRADYILRNRGNIDSLREECKSLYSTLLGKML</sequence>
<comment type="function">
    <text evidence="1">Catalyzes the phosphorylation of the 3'-hydroxyl group of dephosphocoenzyme A to form coenzyme A.</text>
</comment>
<comment type="catalytic activity">
    <reaction evidence="1">
        <text>3'-dephospho-CoA + ATP = ADP + CoA + H(+)</text>
        <dbReference type="Rhea" id="RHEA:18245"/>
        <dbReference type="ChEBI" id="CHEBI:15378"/>
        <dbReference type="ChEBI" id="CHEBI:30616"/>
        <dbReference type="ChEBI" id="CHEBI:57287"/>
        <dbReference type="ChEBI" id="CHEBI:57328"/>
        <dbReference type="ChEBI" id="CHEBI:456216"/>
        <dbReference type="EC" id="2.7.1.24"/>
    </reaction>
</comment>
<comment type="pathway">
    <text evidence="1">Cofactor biosynthesis; coenzyme A biosynthesis; CoA from (R)-pantothenate: step 5/5.</text>
</comment>
<comment type="subcellular location">
    <subcellularLocation>
        <location evidence="1">Cytoplasm</location>
    </subcellularLocation>
</comment>
<comment type="similarity">
    <text evidence="1">Belongs to the CoaE family.</text>
</comment>
<comment type="sequence caution" evidence="2">
    <conflict type="erroneous initiation">
        <sequence resource="EMBL-CDS" id="AAS71634"/>
    </conflict>
    <text>Truncated N-terminus.</text>
</comment>
<accession>Q72MV4</accession>
<protein>
    <recommendedName>
        <fullName evidence="1">Dephospho-CoA kinase</fullName>
        <ecNumber evidence="1">2.7.1.24</ecNumber>
    </recommendedName>
    <alternativeName>
        <fullName evidence="1">Dephosphocoenzyme A kinase</fullName>
    </alternativeName>
</protein>
<proteinExistence type="inferred from homology"/>
<name>COAE_LEPIC</name>